<feature type="chain" id="PRO_1000149659" description="tRNA (guanine-N(7)-)-methyltransferase">
    <location>
        <begin position="1"/>
        <end position="230"/>
    </location>
</feature>
<feature type="active site" evidence="1">
    <location>
        <position position="136"/>
    </location>
</feature>
<feature type="binding site" evidence="2">
    <location>
        <position position="61"/>
    </location>
    <ligand>
        <name>S-adenosyl-L-methionine</name>
        <dbReference type="ChEBI" id="CHEBI:59789"/>
    </ligand>
</feature>
<feature type="binding site" evidence="2">
    <location>
        <position position="86"/>
    </location>
    <ligand>
        <name>S-adenosyl-L-methionine</name>
        <dbReference type="ChEBI" id="CHEBI:59789"/>
    </ligand>
</feature>
<feature type="binding site" evidence="2">
    <location>
        <position position="113"/>
    </location>
    <ligand>
        <name>S-adenosyl-L-methionine</name>
        <dbReference type="ChEBI" id="CHEBI:59789"/>
    </ligand>
</feature>
<feature type="binding site" evidence="2">
    <location>
        <position position="136"/>
    </location>
    <ligand>
        <name>S-adenosyl-L-methionine</name>
        <dbReference type="ChEBI" id="CHEBI:59789"/>
    </ligand>
</feature>
<feature type="binding site" evidence="2">
    <location>
        <position position="140"/>
    </location>
    <ligand>
        <name>substrate</name>
    </ligand>
</feature>
<feature type="binding site" evidence="2">
    <location>
        <position position="172"/>
    </location>
    <ligand>
        <name>substrate</name>
    </ligand>
</feature>
<feature type="binding site" evidence="2">
    <location>
        <begin position="208"/>
        <end position="211"/>
    </location>
    <ligand>
        <name>substrate</name>
    </ligand>
</feature>
<accession>B8ZTI4</accession>
<proteinExistence type="inferred from homology"/>
<dbReference type="EC" id="2.1.1.33" evidence="2"/>
<dbReference type="EMBL" id="FM211192">
    <property type="protein sequence ID" value="CAR72722.1"/>
    <property type="molecule type" value="Genomic_DNA"/>
</dbReference>
<dbReference type="SMR" id="B8ZTI4"/>
<dbReference type="KEGG" id="mlb:MLBr02622"/>
<dbReference type="HOGENOM" id="CLU_050910_0_2_11"/>
<dbReference type="UniPathway" id="UPA00989"/>
<dbReference type="Proteomes" id="UP000006900">
    <property type="component" value="Chromosome"/>
</dbReference>
<dbReference type="GO" id="GO:0043527">
    <property type="term" value="C:tRNA methyltransferase complex"/>
    <property type="evidence" value="ECO:0007669"/>
    <property type="project" value="TreeGrafter"/>
</dbReference>
<dbReference type="GO" id="GO:0008176">
    <property type="term" value="F:tRNA (guanine(46)-N7)-methyltransferase activity"/>
    <property type="evidence" value="ECO:0007669"/>
    <property type="project" value="UniProtKB-UniRule"/>
</dbReference>
<dbReference type="CDD" id="cd02440">
    <property type="entry name" value="AdoMet_MTases"/>
    <property type="match status" value="1"/>
</dbReference>
<dbReference type="Gene3D" id="3.40.50.150">
    <property type="entry name" value="Vaccinia Virus protein VP39"/>
    <property type="match status" value="1"/>
</dbReference>
<dbReference type="HAMAP" id="MF_01057">
    <property type="entry name" value="tRNA_methyltr_TrmB"/>
    <property type="match status" value="1"/>
</dbReference>
<dbReference type="InterPro" id="IPR029063">
    <property type="entry name" value="SAM-dependent_MTases_sf"/>
</dbReference>
<dbReference type="InterPro" id="IPR003358">
    <property type="entry name" value="tRNA_(Gua-N-7)_MeTrfase_Trmb"/>
</dbReference>
<dbReference type="InterPro" id="IPR055361">
    <property type="entry name" value="tRNA_methyltr_TrmB_bact"/>
</dbReference>
<dbReference type="NCBIfam" id="TIGR00091">
    <property type="entry name" value="tRNA (guanosine(46)-N7)-methyltransferase TrmB"/>
    <property type="match status" value="1"/>
</dbReference>
<dbReference type="PANTHER" id="PTHR23417">
    <property type="entry name" value="3-DEOXY-D-MANNO-OCTULOSONIC-ACID TRANSFERASE/TRNA GUANINE-N 7 - -METHYLTRANSFERASE"/>
    <property type="match status" value="1"/>
</dbReference>
<dbReference type="PANTHER" id="PTHR23417:SF14">
    <property type="entry name" value="PENTACOTRIPEPTIDE-REPEAT REGION OF PRORP DOMAIN-CONTAINING PROTEIN"/>
    <property type="match status" value="1"/>
</dbReference>
<dbReference type="Pfam" id="PF02390">
    <property type="entry name" value="Methyltransf_4"/>
    <property type="match status" value="1"/>
</dbReference>
<dbReference type="SUPFAM" id="SSF53335">
    <property type="entry name" value="S-adenosyl-L-methionine-dependent methyltransferases"/>
    <property type="match status" value="1"/>
</dbReference>
<dbReference type="PROSITE" id="PS51625">
    <property type="entry name" value="SAM_MT_TRMB"/>
    <property type="match status" value="1"/>
</dbReference>
<name>TRMB_MYCLB</name>
<sequence length="230" mass="25821">MARHLPATAFRKRRSALSHAQRQTWERLWPEIGISAVSQTRSAERLDTGAWFGRSTLVVLEVGCGSGTATLAMAQHEPDIDVIAVEVYRRGLAQLLCAIDRDQVHNIRMIHGNALYVLQYLIAPRSLTGVRVFFPDPWPKVRHHKRRFLQPATVELIADRLLPGGVLHTATDHPDYAKQIAKFGDGEPLLSRADGRTQLPISTVRPTTKYETKAQHAGNVVTELIWKKRS</sequence>
<evidence type="ECO:0000250" key="1"/>
<evidence type="ECO:0000255" key="2">
    <source>
        <dbReference type="HAMAP-Rule" id="MF_01057"/>
    </source>
</evidence>
<organism>
    <name type="scientific">Mycobacterium leprae (strain Br4923)</name>
    <dbReference type="NCBI Taxonomy" id="561304"/>
    <lineage>
        <taxon>Bacteria</taxon>
        <taxon>Bacillati</taxon>
        <taxon>Actinomycetota</taxon>
        <taxon>Actinomycetes</taxon>
        <taxon>Mycobacteriales</taxon>
        <taxon>Mycobacteriaceae</taxon>
        <taxon>Mycobacterium</taxon>
    </lineage>
</organism>
<protein>
    <recommendedName>
        <fullName evidence="2">tRNA (guanine-N(7)-)-methyltransferase</fullName>
        <ecNumber evidence="2">2.1.1.33</ecNumber>
    </recommendedName>
    <alternativeName>
        <fullName evidence="2">tRNA (guanine(46)-N(7))-methyltransferase</fullName>
    </alternativeName>
    <alternativeName>
        <fullName evidence="2">tRNA(m7G46)-methyltransferase</fullName>
    </alternativeName>
</protein>
<keyword id="KW-0489">Methyltransferase</keyword>
<keyword id="KW-0949">S-adenosyl-L-methionine</keyword>
<keyword id="KW-0808">Transferase</keyword>
<keyword id="KW-0819">tRNA processing</keyword>
<comment type="function">
    <text evidence="2">Catalyzes the formation of N(7)-methylguanine at position 46 (m7G46) in tRNA.</text>
</comment>
<comment type="catalytic activity">
    <reaction evidence="2">
        <text>guanosine(46) in tRNA + S-adenosyl-L-methionine = N(7)-methylguanosine(46) in tRNA + S-adenosyl-L-homocysteine</text>
        <dbReference type="Rhea" id="RHEA:42708"/>
        <dbReference type="Rhea" id="RHEA-COMP:10188"/>
        <dbReference type="Rhea" id="RHEA-COMP:10189"/>
        <dbReference type="ChEBI" id="CHEBI:57856"/>
        <dbReference type="ChEBI" id="CHEBI:59789"/>
        <dbReference type="ChEBI" id="CHEBI:74269"/>
        <dbReference type="ChEBI" id="CHEBI:74480"/>
        <dbReference type="EC" id="2.1.1.33"/>
    </reaction>
</comment>
<comment type="pathway">
    <text evidence="2">tRNA modification; N(7)-methylguanine-tRNA biosynthesis.</text>
</comment>
<comment type="similarity">
    <text evidence="2">Belongs to the class I-like SAM-binding methyltransferase superfamily. TrmB family.</text>
</comment>
<gene>
    <name evidence="2" type="primary">trmB</name>
    <name type="ordered locus">MLBr02622</name>
</gene>
<reference key="1">
    <citation type="journal article" date="2009" name="Nat. Genet.">
        <title>Comparative genomic and phylogeographic analysis of Mycobacterium leprae.</title>
        <authorList>
            <person name="Monot M."/>
            <person name="Honore N."/>
            <person name="Garnier T."/>
            <person name="Zidane N."/>
            <person name="Sherafi D."/>
            <person name="Paniz-Mondolfi A."/>
            <person name="Matsuoka M."/>
            <person name="Taylor G.M."/>
            <person name="Donoghue H.D."/>
            <person name="Bouwman A."/>
            <person name="Mays S."/>
            <person name="Watson C."/>
            <person name="Lockwood D."/>
            <person name="Khamispour A."/>
            <person name="Dowlati Y."/>
            <person name="Jianping S."/>
            <person name="Rea T.H."/>
            <person name="Vera-Cabrera L."/>
            <person name="Stefani M.M."/>
            <person name="Banu S."/>
            <person name="Macdonald M."/>
            <person name="Sapkota B.R."/>
            <person name="Spencer J.S."/>
            <person name="Thomas J."/>
            <person name="Harshman K."/>
            <person name="Singh P."/>
            <person name="Busso P."/>
            <person name="Gattiker A."/>
            <person name="Rougemont J."/>
            <person name="Brennan P.J."/>
            <person name="Cole S.T."/>
        </authorList>
    </citation>
    <scope>NUCLEOTIDE SEQUENCE [LARGE SCALE GENOMIC DNA]</scope>
    <source>
        <strain>Br4923</strain>
    </source>
</reference>